<sequence>MALERSEVEKIAHLARLGLNESDIPQTTETLNSILGLIDQMQAVDTQGIEPLAHPLEATQRLRADVVSEHNQRDAYQAIAPAVESGLYLVPKVIE</sequence>
<organism>
    <name type="scientific">Ectopseudomonas mendocina (strain ymp)</name>
    <name type="common">Pseudomonas mendocina</name>
    <dbReference type="NCBI Taxonomy" id="399739"/>
    <lineage>
        <taxon>Bacteria</taxon>
        <taxon>Pseudomonadati</taxon>
        <taxon>Pseudomonadota</taxon>
        <taxon>Gammaproteobacteria</taxon>
        <taxon>Pseudomonadales</taxon>
        <taxon>Pseudomonadaceae</taxon>
        <taxon>Ectopseudomonas</taxon>
    </lineage>
</organism>
<feature type="chain" id="PRO_1000016182" description="Aspartyl/glutamyl-tRNA(Asn/Gln) amidotransferase subunit C">
    <location>
        <begin position="1"/>
        <end position="95"/>
    </location>
</feature>
<reference key="1">
    <citation type="submission" date="2007-04" db="EMBL/GenBank/DDBJ databases">
        <title>Complete sequence of Pseudomonas mendocina ymp.</title>
        <authorList>
            <consortium name="US DOE Joint Genome Institute"/>
            <person name="Copeland A."/>
            <person name="Lucas S."/>
            <person name="Lapidus A."/>
            <person name="Barry K."/>
            <person name="Glavina del Rio T."/>
            <person name="Dalin E."/>
            <person name="Tice H."/>
            <person name="Pitluck S."/>
            <person name="Kiss H."/>
            <person name="Brettin T."/>
            <person name="Detter J.C."/>
            <person name="Bruce D."/>
            <person name="Han C."/>
            <person name="Schmutz J."/>
            <person name="Larimer F."/>
            <person name="Land M."/>
            <person name="Hauser L."/>
            <person name="Kyrpides N."/>
            <person name="Mikhailova N."/>
            <person name="Hersman L."/>
            <person name="Dubois J."/>
            <person name="Maurice P."/>
            <person name="Richardson P."/>
        </authorList>
    </citation>
    <scope>NUCLEOTIDE SEQUENCE [LARGE SCALE GENOMIC DNA]</scope>
    <source>
        <strain>ymp</strain>
    </source>
</reference>
<dbReference type="EC" id="6.3.5.-" evidence="1"/>
<dbReference type="EMBL" id="CP000680">
    <property type="protein sequence ID" value="ABP83623.1"/>
    <property type="molecule type" value="Genomic_DNA"/>
</dbReference>
<dbReference type="SMR" id="A4XQK7"/>
<dbReference type="STRING" id="399739.Pmen_0855"/>
<dbReference type="KEGG" id="pmy:Pmen_0855"/>
<dbReference type="PATRIC" id="fig|399739.8.peg.863"/>
<dbReference type="eggNOG" id="COG0721">
    <property type="taxonomic scope" value="Bacteria"/>
</dbReference>
<dbReference type="HOGENOM" id="CLU_105899_2_2_6"/>
<dbReference type="OrthoDB" id="9794326at2"/>
<dbReference type="GO" id="GO:0050566">
    <property type="term" value="F:asparaginyl-tRNA synthase (glutamine-hydrolyzing) activity"/>
    <property type="evidence" value="ECO:0007669"/>
    <property type="project" value="RHEA"/>
</dbReference>
<dbReference type="GO" id="GO:0005524">
    <property type="term" value="F:ATP binding"/>
    <property type="evidence" value="ECO:0007669"/>
    <property type="project" value="UniProtKB-KW"/>
</dbReference>
<dbReference type="GO" id="GO:0050567">
    <property type="term" value="F:glutaminyl-tRNA synthase (glutamine-hydrolyzing) activity"/>
    <property type="evidence" value="ECO:0007669"/>
    <property type="project" value="UniProtKB-UniRule"/>
</dbReference>
<dbReference type="GO" id="GO:0070681">
    <property type="term" value="P:glutaminyl-tRNAGln biosynthesis via transamidation"/>
    <property type="evidence" value="ECO:0007669"/>
    <property type="project" value="TreeGrafter"/>
</dbReference>
<dbReference type="GO" id="GO:0006450">
    <property type="term" value="P:regulation of translational fidelity"/>
    <property type="evidence" value="ECO:0007669"/>
    <property type="project" value="InterPro"/>
</dbReference>
<dbReference type="GO" id="GO:0006412">
    <property type="term" value="P:translation"/>
    <property type="evidence" value="ECO:0007669"/>
    <property type="project" value="UniProtKB-UniRule"/>
</dbReference>
<dbReference type="Gene3D" id="1.10.20.60">
    <property type="entry name" value="Glu-tRNAGln amidotransferase C subunit, N-terminal domain"/>
    <property type="match status" value="1"/>
</dbReference>
<dbReference type="HAMAP" id="MF_00122">
    <property type="entry name" value="GatC"/>
    <property type="match status" value="1"/>
</dbReference>
<dbReference type="InterPro" id="IPR036113">
    <property type="entry name" value="Asp/Glu-ADT_sf_sub_c"/>
</dbReference>
<dbReference type="InterPro" id="IPR003837">
    <property type="entry name" value="GatC"/>
</dbReference>
<dbReference type="NCBIfam" id="TIGR00135">
    <property type="entry name" value="gatC"/>
    <property type="match status" value="1"/>
</dbReference>
<dbReference type="PANTHER" id="PTHR15004">
    <property type="entry name" value="GLUTAMYL-TRNA(GLN) AMIDOTRANSFERASE SUBUNIT C, MITOCHONDRIAL"/>
    <property type="match status" value="1"/>
</dbReference>
<dbReference type="PANTHER" id="PTHR15004:SF0">
    <property type="entry name" value="GLUTAMYL-TRNA(GLN) AMIDOTRANSFERASE SUBUNIT C, MITOCHONDRIAL"/>
    <property type="match status" value="1"/>
</dbReference>
<dbReference type="Pfam" id="PF02686">
    <property type="entry name" value="GatC"/>
    <property type="match status" value="1"/>
</dbReference>
<dbReference type="SUPFAM" id="SSF141000">
    <property type="entry name" value="Glu-tRNAGln amidotransferase C subunit"/>
    <property type="match status" value="1"/>
</dbReference>
<protein>
    <recommendedName>
        <fullName evidence="1">Aspartyl/glutamyl-tRNA(Asn/Gln) amidotransferase subunit C</fullName>
        <shortName evidence="1">Asp/Glu-ADT subunit C</shortName>
        <ecNumber evidence="1">6.3.5.-</ecNumber>
    </recommendedName>
</protein>
<evidence type="ECO:0000255" key="1">
    <source>
        <dbReference type="HAMAP-Rule" id="MF_00122"/>
    </source>
</evidence>
<proteinExistence type="inferred from homology"/>
<gene>
    <name evidence="1" type="primary">gatC</name>
    <name type="ordered locus">Pmen_0855</name>
</gene>
<comment type="function">
    <text evidence="1">Allows the formation of correctly charged Asn-tRNA(Asn) or Gln-tRNA(Gln) through the transamidation of misacylated Asp-tRNA(Asn) or Glu-tRNA(Gln) in organisms which lack either or both of asparaginyl-tRNA or glutaminyl-tRNA synthetases. The reaction takes place in the presence of glutamine and ATP through an activated phospho-Asp-tRNA(Asn) or phospho-Glu-tRNA(Gln).</text>
</comment>
<comment type="catalytic activity">
    <reaction evidence="1">
        <text>L-glutamyl-tRNA(Gln) + L-glutamine + ATP + H2O = L-glutaminyl-tRNA(Gln) + L-glutamate + ADP + phosphate + H(+)</text>
        <dbReference type="Rhea" id="RHEA:17521"/>
        <dbReference type="Rhea" id="RHEA-COMP:9681"/>
        <dbReference type="Rhea" id="RHEA-COMP:9684"/>
        <dbReference type="ChEBI" id="CHEBI:15377"/>
        <dbReference type="ChEBI" id="CHEBI:15378"/>
        <dbReference type="ChEBI" id="CHEBI:29985"/>
        <dbReference type="ChEBI" id="CHEBI:30616"/>
        <dbReference type="ChEBI" id="CHEBI:43474"/>
        <dbReference type="ChEBI" id="CHEBI:58359"/>
        <dbReference type="ChEBI" id="CHEBI:78520"/>
        <dbReference type="ChEBI" id="CHEBI:78521"/>
        <dbReference type="ChEBI" id="CHEBI:456216"/>
    </reaction>
</comment>
<comment type="catalytic activity">
    <reaction evidence="1">
        <text>L-aspartyl-tRNA(Asn) + L-glutamine + ATP + H2O = L-asparaginyl-tRNA(Asn) + L-glutamate + ADP + phosphate + 2 H(+)</text>
        <dbReference type="Rhea" id="RHEA:14513"/>
        <dbReference type="Rhea" id="RHEA-COMP:9674"/>
        <dbReference type="Rhea" id="RHEA-COMP:9677"/>
        <dbReference type="ChEBI" id="CHEBI:15377"/>
        <dbReference type="ChEBI" id="CHEBI:15378"/>
        <dbReference type="ChEBI" id="CHEBI:29985"/>
        <dbReference type="ChEBI" id="CHEBI:30616"/>
        <dbReference type="ChEBI" id="CHEBI:43474"/>
        <dbReference type="ChEBI" id="CHEBI:58359"/>
        <dbReference type="ChEBI" id="CHEBI:78515"/>
        <dbReference type="ChEBI" id="CHEBI:78516"/>
        <dbReference type="ChEBI" id="CHEBI:456216"/>
    </reaction>
</comment>
<comment type="subunit">
    <text evidence="1">Heterotrimer of A, B and C subunits.</text>
</comment>
<comment type="similarity">
    <text evidence="1">Belongs to the GatC family.</text>
</comment>
<keyword id="KW-0067">ATP-binding</keyword>
<keyword id="KW-0436">Ligase</keyword>
<keyword id="KW-0547">Nucleotide-binding</keyword>
<keyword id="KW-0648">Protein biosynthesis</keyword>
<accession>A4XQK7</accession>
<name>GATC_ECTM1</name>